<feature type="signal peptide" evidence="1">
    <location>
        <begin position="1"/>
        <end position="24"/>
    </location>
</feature>
<feature type="chain" id="PRO_0000032388" description="Alpha-1-antitrypsin 1-1">
    <location>
        <begin position="25"/>
        <end position="413"/>
    </location>
</feature>
<feature type="region of interest" description="RCL">
    <location>
        <begin position="368"/>
        <end position="387"/>
    </location>
</feature>
<feature type="site" description="Reactive bond" evidence="1">
    <location>
        <begin position="377"/>
        <end position="378"/>
    </location>
</feature>
<feature type="glycosylation site" description="N-linked (GlcNAc...) asparagine" evidence="4">
    <location>
        <position position="64"/>
    </location>
</feature>
<feature type="glycosylation site" description="N-linked (GlcNAc...) asparagine" evidence="4">
    <location>
        <position position="101"/>
    </location>
</feature>
<feature type="glycosylation site" description="N-linked (GlcNAc...) asparagine" evidence="2">
    <location>
        <position position="265"/>
    </location>
</feature>
<feature type="sequence conflict" description="In Ref. 2; AAM47488, 4; AAH11040/AAH37007/AAH49970/AAH57982/AAH57984/AAH57989 and 5; AAA51624." evidence="6" ref="2 4 5">
    <original>H</original>
    <variation>D</variation>
    <location>
        <position position="246"/>
    </location>
</feature>
<feature type="sequence conflict" description="In Ref. 5; AAA51624." evidence="6" ref="5">
    <original>P</original>
    <variation>L</variation>
    <location>
        <position position="323"/>
    </location>
</feature>
<feature type="sequence conflict" description="In Ref. 2; AAM47488, 4; AAH11040/AAH37007/AAH49970/AAH57982/AAH57984/AAH57989 and 5; AAA51624." evidence="6" ref="2 4 5">
    <original>L</original>
    <variation>V</variation>
    <location>
        <position position="404"/>
    </location>
</feature>
<accession>P07758</accession>
<accession>Q3UJ47</accession>
<accession>Q80YB8</accession>
<accession>Q8JZV6</accession>
<accession>Q91XB8</accession>
<name>A1AT1_MOUSE</name>
<proteinExistence type="evidence at protein level"/>
<comment type="function">
    <text evidence="3 5">Inhibitor of serine proteases. Its primary target is elastase, but it also has a moderate affinity for plasmin and thrombin.</text>
</comment>
<comment type="subcellular location">
    <subcellularLocation>
        <location evidence="3 5">Secreted</location>
    </subcellularLocation>
</comment>
<comment type="domain">
    <text evidence="1">The reactive center loop (RCL) extends out from the body of the protein and directs binding to the target protease. The protease cleaves the serpin at the reactive site within the RCL, establishing a covalent linkage between the carboxyl group of the serpin reactive site and the serine hydroxyl of the protease. The resulting inactive serpin-protease complex is highly stable (By similarity). Variability within the reactive center loop (RCL) sequences of Serpina1-related genes may determine target protease specificity.</text>
</comment>
<comment type="miscellaneous">
    <text>Murine alpha-1-antitrypsin is represented by a cluster of up to 6 individual Serpina1-related genes. The precise complement of Serpina1-related genes present varies according to the strain of the animal.</text>
</comment>
<comment type="similarity">
    <text evidence="6">Belongs to the serpin family.</text>
</comment>
<gene>
    <name type="primary">Serpina1a</name>
    <name type="synonym">Dom1</name>
    <name type="synonym">Spi1-1</name>
</gene>
<organism>
    <name type="scientific">Mus musculus</name>
    <name type="common">Mouse</name>
    <dbReference type="NCBI Taxonomy" id="10090"/>
    <lineage>
        <taxon>Eukaryota</taxon>
        <taxon>Metazoa</taxon>
        <taxon>Chordata</taxon>
        <taxon>Craniata</taxon>
        <taxon>Vertebrata</taxon>
        <taxon>Euteleostomi</taxon>
        <taxon>Mammalia</taxon>
        <taxon>Eutheria</taxon>
        <taxon>Euarchontoglires</taxon>
        <taxon>Glires</taxon>
        <taxon>Rodentia</taxon>
        <taxon>Myomorpha</taxon>
        <taxon>Muroidea</taxon>
        <taxon>Muridae</taxon>
        <taxon>Murinae</taxon>
        <taxon>Mus</taxon>
        <taxon>Mus</taxon>
    </lineage>
</organism>
<sequence>MTPSISWGLLLLAGLCCLVPSFLAEDVQETDTSQKDQSPASHEIATNLGDFAISLYRELVHQSNTSNIFFSPVSIATAFAMLSLGSKGDTHTQILEGLQFNLTQTSEADIHKSFQHLLQTLNRPDSELQLSTGNGLFVNNDLKLVEKFLEEAKNHYQAEVFSVNFAESEEAKKVINDFVEKGTQGKIAEAVKKLDQDTVFALANYILFKGKWKKPFDPENTEEAEFHVDESTTVKVPMMTLSGMLHVHHCSTLSSWVLLMDYAGNATAVFLLPDDGKMQHLEQTLSKELISKFLLNRRRRLAQIHFPRLSISGEYNLKTLMSPLGITRIFNNGADLSGITEENAPLKLSQAVHKAVLTIDETGTEAAAVTVLQMVPMSMPPILRFDHPFLFIIFEEHTQSPIFLGKVVDPTHK</sequence>
<reference key="1">
    <citation type="journal article" date="1991" name="Proc. Natl. Acad. Sci. U.S.A.">
        <title>Multiple murine alpha 1-protease inhibitor genes show unusual evolutionary divergence.</title>
        <authorList>
            <person name="Borriello F."/>
            <person name="Krauter K.S."/>
        </authorList>
    </citation>
    <scope>NUCLEOTIDE SEQUENCE [MRNA]</scope>
    <source>
        <strain>C57BL/6J</strain>
        <tissue>Liver</tissue>
    </source>
</reference>
<reference key="2">
    <citation type="journal article" date="2002" name="Genomics">
        <title>The murine alpha(1)-proteinase inhibitor gene family: polymorphism, chromosomal location, and structure.</title>
        <authorList>
            <person name="Barbour K.W."/>
            <person name="Wei F."/>
            <person name="Brannan C."/>
            <person name="Flotte T.R."/>
            <person name="Baumann H."/>
            <person name="Berger F.G."/>
        </authorList>
    </citation>
    <scope>NUCLEOTIDE SEQUENCE [GENOMIC DNA]</scope>
    <source>
        <strain>129/J</strain>
    </source>
</reference>
<reference key="3">
    <citation type="journal article" date="2005" name="Science">
        <title>The transcriptional landscape of the mammalian genome.</title>
        <authorList>
            <person name="Carninci P."/>
            <person name="Kasukawa T."/>
            <person name="Katayama S."/>
            <person name="Gough J."/>
            <person name="Frith M.C."/>
            <person name="Maeda N."/>
            <person name="Oyama R."/>
            <person name="Ravasi T."/>
            <person name="Lenhard B."/>
            <person name="Wells C."/>
            <person name="Kodzius R."/>
            <person name="Shimokawa K."/>
            <person name="Bajic V.B."/>
            <person name="Brenner S.E."/>
            <person name="Batalov S."/>
            <person name="Forrest A.R."/>
            <person name="Zavolan M."/>
            <person name="Davis M.J."/>
            <person name="Wilming L.G."/>
            <person name="Aidinis V."/>
            <person name="Allen J.E."/>
            <person name="Ambesi-Impiombato A."/>
            <person name="Apweiler R."/>
            <person name="Aturaliya R.N."/>
            <person name="Bailey T.L."/>
            <person name="Bansal M."/>
            <person name="Baxter L."/>
            <person name="Beisel K.W."/>
            <person name="Bersano T."/>
            <person name="Bono H."/>
            <person name="Chalk A.M."/>
            <person name="Chiu K.P."/>
            <person name="Choudhary V."/>
            <person name="Christoffels A."/>
            <person name="Clutterbuck D.R."/>
            <person name="Crowe M.L."/>
            <person name="Dalla E."/>
            <person name="Dalrymple B.P."/>
            <person name="de Bono B."/>
            <person name="Della Gatta G."/>
            <person name="di Bernardo D."/>
            <person name="Down T."/>
            <person name="Engstrom P."/>
            <person name="Fagiolini M."/>
            <person name="Faulkner G."/>
            <person name="Fletcher C.F."/>
            <person name="Fukushima T."/>
            <person name="Furuno M."/>
            <person name="Futaki S."/>
            <person name="Gariboldi M."/>
            <person name="Georgii-Hemming P."/>
            <person name="Gingeras T.R."/>
            <person name="Gojobori T."/>
            <person name="Green R.E."/>
            <person name="Gustincich S."/>
            <person name="Harbers M."/>
            <person name="Hayashi Y."/>
            <person name="Hensch T.K."/>
            <person name="Hirokawa N."/>
            <person name="Hill D."/>
            <person name="Huminiecki L."/>
            <person name="Iacono M."/>
            <person name="Ikeo K."/>
            <person name="Iwama A."/>
            <person name="Ishikawa T."/>
            <person name="Jakt M."/>
            <person name="Kanapin A."/>
            <person name="Katoh M."/>
            <person name="Kawasawa Y."/>
            <person name="Kelso J."/>
            <person name="Kitamura H."/>
            <person name="Kitano H."/>
            <person name="Kollias G."/>
            <person name="Krishnan S.P."/>
            <person name="Kruger A."/>
            <person name="Kummerfeld S.K."/>
            <person name="Kurochkin I.V."/>
            <person name="Lareau L.F."/>
            <person name="Lazarevic D."/>
            <person name="Lipovich L."/>
            <person name="Liu J."/>
            <person name="Liuni S."/>
            <person name="McWilliam S."/>
            <person name="Madan Babu M."/>
            <person name="Madera M."/>
            <person name="Marchionni L."/>
            <person name="Matsuda H."/>
            <person name="Matsuzawa S."/>
            <person name="Miki H."/>
            <person name="Mignone F."/>
            <person name="Miyake S."/>
            <person name="Morris K."/>
            <person name="Mottagui-Tabar S."/>
            <person name="Mulder N."/>
            <person name="Nakano N."/>
            <person name="Nakauchi H."/>
            <person name="Ng P."/>
            <person name="Nilsson R."/>
            <person name="Nishiguchi S."/>
            <person name="Nishikawa S."/>
            <person name="Nori F."/>
            <person name="Ohara O."/>
            <person name="Okazaki Y."/>
            <person name="Orlando V."/>
            <person name="Pang K.C."/>
            <person name="Pavan W.J."/>
            <person name="Pavesi G."/>
            <person name="Pesole G."/>
            <person name="Petrovsky N."/>
            <person name="Piazza S."/>
            <person name="Reed J."/>
            <person name="Reid J.F."/>
            <person name="Ring B.Z."/>
            <person name="Ringwald M."/>
            <person name="Rost B."/>
            <person name="Ruan Y."/>
            <person name="Salzberg S.L."/>
            <person name="Sandelin A."/>
            <person name="Schneider C."/>
            <person name="Schoenbach C."/>
            <person name="Sekiguchi K."/>
            <person name="Semple C.A."/>
            <person name="Seno S."/>
            <person name="Sessa L."/>
            <person name="Sheng Y."/>
            <person name="Shibata Y."/>
            <person name="Shimada H."/>
            <person name="Shimada K."/>
            <person name="Silva D."/>
            <person name="Sinclair B."/>
            <person name="Sperling S."/>
            <person name="Stupka E."/>
            <person name="Sugiura K."/>
            <person name="Sultana R."/>
            <person name="Takenaka Y."/>
            <person name="Taki K."/>
            <person name="Tammoja K."/>
            <person name="Tan S.L."/>
            <person name="Tang S."/>
            <person name="Taylor M.S."/>
            <person name="Tegner J."/>
            <person name="Teichmann S.A."/>
            <person name="Ueda H.R."/>
            <person name="van Nimwegen E."/>
            <person name="Verardo R."/>
            <person name="Wei C.L."/>
            <person name="Yagi K."/>
            <person name="Yamanishi H."/>
            <person name="Zabarovsky E."/>
            <person name="Zhu S."/>
            <person name="Zimmer A."/>
            <person name="Hide W."/>
            <person name="Bult C."/>
            <person name="Grimmond S.M."/>
            <person name="Teasdale R.D."/>
            <person name="Liu E.T."/>
            <person name="Brusic V."/>
            <person name="Quackenbush J."/>
            <person name="Wahlestedt C."/>
            <person name="Mattick J.S."/>
            <person name="Hume D.A."/>
            <person name="Kai C."/>
            <person name="Sasaki D."/>
            <person name="Tomaru Y."/>
            <person name="Fukuda S."/>
            <person name="Kanamori-Katayama M."/>
            <person name="Suzuki M."/>
            <person name="Aoki J."/>
            <person name="Arakawa T."/>
            <person name="Iida J."/>
            <person name="Imamura K."/>
            <person name="Itoh M."/>
            <person name="Kato T."/>
            <person name="Kawaji H."/>
            <person name="Kawagashira N."/>
            <person name="Kawashima T."/>
            <person name="Kojima M."/>
            <person name="Kondo S."/>
            <person name="Konno H."/>
            <person name="Nakano K."/>
            <person name="Ninomiya N."/>
            <person name="Nishio T."/>
            <person name="Okada M."/>
            <person name="Plessy C."/>
            <person name="Shibata K."/>
            <person name="Shiraki T."/>
            <person name="Suzuki S."/>
            <person name="Tagami M."/>
            <person name="Waki K."/>
            <person name="Watahiki A."/>
            <person name="Okamura-Oho Y."/>
            <person name="Suzuki H."/>
            <person name="Kawai J."/>
            <person name="Hayashizaki Y."/>
        </authorList>
    </citation>
    <scope>NUCLEOTIDE SEQUENCE [LARGE SCALE MRNA]</scope>
    <source>
        <strain>C57BL/6J</strain>
        <tissue>Amnion</tissue>
    </source>
</reference>
<reference key="4">
    <citation type="journal article" date="2004" name="Genome Res.">
        <title>The status, quality, and expansion of the NIH full-length cDNA project: the Mammalian Gene Collection (MGC).</title>
        <authorList>
            <consortium name="The MGC Project Team"/>
        </authorList>
    </citation>
    <scope>NUCLEOTIDE SEQUENCE [LARGE SCALE MRNA]</scope>
    <source>
        <strain>FVB/N</strain>
        <tissue>Liver</tissue>
    </source>
</reference>
<reference key="5">
    <citation type="journal article" date="1986" name="DNA">
        <title>Isolation and characterization of the alpha 1-antitrypsin gene of mice.</title>
        <authorList>
            <person name="Krauter K.S."/>
            <person name="Citron B.A."/>
            <person name="Hsu M.T."/>
            <person name="Powell D."/>
            <person name="Darnell J.E. Jr."/>
        </authorList>
    </citation>
    <scope>NUCLEOTIDE SEQUENCE [MRNA] OF 211-413</scope>
</reference>
<reference key="6">
    <citation type="journal article" date="1996" name="Biochem. Biophys. Res. Commun.">
        <title>The expression and characterization of five recombinant murine alpha 1-protease inhibitor proteins.</title>
        <authorList>
            <person name="Paterson T."/>
            <person name="Moore S."/>
        </authorList>
    </citation>
    <scope>FUNCTION</scope>
    <scope>SUBCELLULAR LOCATION</scope>
</reference>
<reference key="7">
    <citation type="journal article" date="2002" name="Mol. Biol. Evol.">
        <title>Functional diversification during evolution of the murine alpha(1)-proteinase inhibitor family: role of the hypervariable reactive center loop.</title>
        <authorList>
            <person name="Barbour K.W."/>
            <person name="Goodwin R.L."/>
            <person name="Guillonneau F."/>
            <person name="Wang Y."/>
            <person name="Baumann H."/>
            <person name="Berger F.G."/>
        </authorList>
    </citation>
    <scope>FUNCTION</scope>
    <scope>SUBCELLULAR LOCATION</scope>
    <scope>REGION RCL</scope>
</reference>
<reference key="8">
    <citation type="journal article" date="2003" name="Genomics">
        <title>A review and comparison of the murine alpha1-antitrypsin and alpha1-antichymotrypsin multigene clusters with the human clade A serpins.</title>
        <authorList>
            <person name="Forsyth S."/>
            <person name="Horvath A."/>
            <person name="Coughlin P."/>
        </authorList>
    </citation>
    <scope>GENE FAMILY</scope>
    <scope>NOMENCLATURE</scope>
</reference>
<reference key="9">
    <citation type="journal article" date="2007" name="J. Proteome Res.">
        <title>Enhanced analysis of the mouse plasma proteome using cysteine-containing tryptic glycopeptides.</title>
        <authorList>
            <person name="Bernhard O.K."/>
            <person name="Kapp E.A."/>
            <person name="Simpson R.J."/>
        </authorList>
    </citation>
    <scope>GLYCOSYLATION [LARGE SCALE ANALYSIS] AT ASN-64 AND ASN-101</scope>
    <source>
        <strain>C57BL/6J</strain>
        <tissue>Plasma</tissue>
    </source>
</reference>
<dbReference type="EMBL" id="M75721">
    <property type="protein sequence ID" value="AAC28869.1"/>
    <property type="molecule type" value="mRNA"/>
</dbReference>
<dbReference type="EMBL" id="AF481949">
    <property type="protein sequence ID" value="AAM47488.1"/>
    <property type="molecule type" value="Genomic_DNA"/>
</dbReference>
<dbReference type="EMBL" id="AK146619">
    <property type="protein sequence ID" value="BAE27308.1"/>
    <property type="molecule type" value="mRNA"/>
</dbReference>
<dbReference type="EMBL" id="BC011040">
    <property type="protein sequence ID" value="AAH11040.1"/>
    <property type="molecule type" value="mRNA"/>
</dbReference>
<dbReference type="EMBL" id="BC037007">
    <property type="protein sequence ID" value="AAH37007.2"/>
    <property type="molecule type" value="mRNA"/>
</dbReference>
<dbReference type="EMBL" id="BC049970">
    <property type="protein sequence ID" value="AAH49970.2"/>
    <property type="molecule type" value="mRNA"/>
</dbReference>
<dbReference type="EMBL" id="BC057982">
    <property type="protein sequence ID" value="AAH57982.1"/>
    <property type="molecule type" value="mRNA"/>
</dbReference>
<dbReference type="EMBL" id="BC057984">
    <property type="protein sequence ID" value="AAH57984.1"/>
    <property type="molecule type" value="mRNA"/>
</dbReference>
<dbReference type="EMBL" id="BC057989">
    <property type="protein sequence ID" value="AAH57989.1"/>
    <property type="molecule type" value="mRNA"/>
</dbReference>
<dbReference type="EMBL" id="AH002568">
    <property type="protein sequence ID" value="AAA51624.1"/>
    <property type="molecule type" value="mRNA"/>
</dbReference>
<dbReference type="CCDS" id="CCDS26140.1"/>
<dbReference type="PIR" id="I49470">
    <property type="entry name" value="I49470"/>
</dbReference>
<dbReference type="RefSeq" id="NP_033269.1">
    <property type="nucleotide sequence ID" value="NM_009243.4"/>
</dbReference>
<dbReference type="RefSeq" id="XP_017174431.1">
    <property type="nucleotide sequence ID" value="XM_017318942.1"/>
</dbReference>
<dbReference type="SMR" id="P07758"/>
<dbReference type="BioGRID" id="203427">
    <property type="interactions" value="5"/>
</dbReference>
<dbReference type="FunCoup" id="P07758">
    <property type="interactions" value="208"/>
</dbReference>
<dbReference type="STRING" id="10090.ENSMUSP00000072652"/>
<dbReference type="MEROPS" id="I04.001"/>
<dbReference type="GlyCosmos" id="P07758">
    <property type="glycosylation" value="3 sites, No reported glycans"/>
</dbReference>
<dbReference type="GlyGen" id="P07758">
    <property type="glycosylation" value="5 sites, 1 N-linked glycan (1 site), 1 O-linked glycan (2 sites)"/>
</dbReference>
<dbReference type="iPTMnet" id="P07758"/>
<dbReference type="PhosphoSitePlus" id="P07758"/>
<dbReference type="jPOST" id="P07758"/>
<dbReference type="PaxDb" id="10090-ENSMUSP00000082132"/>
<dbReference type="PeptideAtlas" id="P07758"/>
<dbReference type="ProteomicsDB" id="285740"/>
<dbReference type="DNASU" id="20700"/>
<dbReference type="DNASU" id="20703"/>
<dbReference type="Ensembl" id="ENSMUST00000085056.8">
    <property type="protein sequence ID" value="ENSMUSP00000082132.7"/>
    <property type="gene ID" value="ENSMUSG00000066366.15"/>
</dbReference>
<dbReference type="GeneID" id="20700"/>
<dbReference type="KEGG" id="mmu:20700"/>
<dbReference type="UCSC" id="uc007owh.1">
    <property type="organism name" value="mouse"/>
</dbReference>
<dbReference type="AGR" id="MGI:891971"/>
<dbReference type="CTD" id="20700"/>
<dbReference type="MGI" id="MGI:891971">
    <property type="gene designation" value="Serpina1a"/>
</dbReference>
<dbReference type="VEuPathDB" id="HostDB:ENSMUSG00000066366"/>
<dbReference type="eggNOG" id="KOG2392">
    <property type="taxonomic scope" value="Eukaryota"/>
</dbReference>
<dbReference type="GeneTree" id="ENSGT00940000154493"/>
<dbReference type="HOGENOM" id="CLU_023330_2_1_1"/>
<dbReference type="InParanoid" id="P07758"/>
<dbReference type="OMA" id="WATHHTI"/>
<dbReference type="OrthoDB" id="671595at2759"/>
<dbReference type="PhylomeDB" id="P07758"/>
<dbReference type="TreeFam" id="TF343201"/>
<dbReference type="BioGRID-ORCS" id="20700">
    <property type="hits" value="4 hits in 38 CRISPR screens"/>
</dbReference>
<dbReference type="BioGRID-ORCS" id="20703">
    <property type="hits" value="2 hits in 74 CRISPR screens"/>
</dbReference>
<dbReference type="ChiTaRS" id="Serpina1a">
    <property type="organism name" value="mouse"/>
</dbReference>
<dbReference type="PRO" id="PR:P07758"/>
<dbReference type="Proteomes" id="UP000000589">
    <property type="component" value="Chromosome 12"/>
</dbReference>
<dbReference type="RNAct" id="P07758">
    <property type="molecule type" value="protein"/>
</dbReference>
<dbReference type="Bgee" id="ENSMUSG00000066366">
    <property type="expression patterns" value="Expressed in left lobe of liver and 92 other cell types or tissues"/>
</dbReference>
<dbReference type="ExpressionAtlas" id="P07758">
    <property type="expression patterns" value="baseline and differential"/>
</dbReference>
<dbReference type="GO" id="GO:0062023">
    <property type="term" value="C:collagen-containing extracellular matrix"/>
    <property type="evidence" value="ECO:0007005"/>
    <property type="project" value="BHF-UCL"/>
</dbReference>
<dbReference type="GO" id="GO:0005576">
    <property type="term" value="C:extracellular region"/>
    <property type="evidence" value="ECO:0000314"/>
    <property type="project" value="MGI"/>
</dbReference>
<dbReference type="GO" id="GO:0005615">
    <property type="term" value="C:extracellular space"/>
    <property type="evidence" value="ECO:0007669"/>
    <property type="project" value="InterPro"/>
</dbReference>
<dbReference type="GO" id="GO:0004867">
    <property type="term" value="F:serine-type endopeptidase inhibitor activity"/>
    <property type="evidence" value="ECO:0007669"/>
    <property type="project" value="UniProtKB-KW"/>
</dbReference>
<dbReference type="GO" id="GO:0006953">
    <property type="term" value="P:acute-phase response"/>
    <property type="evidence" value="ECO:0007669"/>
    <property type="project" value="UniProtKB-KW"/>
</dbReference>
<dbReference type="GO" id="GO:0006487">
    <property type="term" value="P:protein N-linked glycosylation"/>
    <property type="evidence" value="ECO:0000314"/>
    <property type="project" value="MGI"/>
</dbReference>
<dbReference type="GO" id="GO:0034097">
    <property type="term" value="P:response to cytokine"/>
    <property type="evidence" value="ECO:0000314"/>
    <property type="project" value="MGI"/>
</dbReference>
<dbReference type="GO" id="GO:0043434">
    <property type="term" value="P:response to peptide hormone"/>
    <property type="evidence" value="ECO:0000314"/>
    <property type="project" value="MGI"/>
</dbReference>
<dbReference type="CDD" id="cd02056">
    <property type="entry name" value="serpinA1_A1AT"/>
    <property type="match status" value="1"/>
</dbReference>
<dbReference type="FunFam" id="2.30.39.10:FF:000003">
    <property type="entry name" value="alpha-1-antitrypsin isoform X1"/>
    <property type="match status" value="1"/>
</dbReference>
<dbReference type="FunFam" id="3.30.497.10:FF:000001">
    <property type="entry name" value="Serine protease inhibitor"/>
    <property type="match status" value="1"/>
</dbReference>
<dbReference type="FunFam" id="2.10.310.10:FF:000001">
    <property type="entry name" value="Serpin family A member 1"/>
    <property type="match status" value="1"/>
</dbReference>
<dbReference type="Gene3D" id="2.30.39.10">
    <property type="entry name" value="Alpha-1-antitrypsin, domain 1"/>
    <property type="match status" value="1"/>
</dbReference>
<dbReference type="Gene3D" id="3.30.497.10">
    <property type="entry name" value="Antithrombin, subunit I, domain 2"/>
    <property type="match status" value="1"/>
</dbReference>
<dbReference type="Gene3D" id="2.10.310.10">
    <property type="entry name" value="Serpins superfamily"/>
    <property type="match status" value="1"/>
</dbReference>
<dbReference type="InterPro" id="IPR023795">
    <property type="entry name" value="Serpin_CS"/>
</dbReference>
<dbReference type="InterPro" id="IPR023796">
    <property type="entry name" value="Serpin_dom"/>
</dbReference>
<dbReference type="InterPro" id="IPR000215">
    <property type="entry name" value="Serpin_fam"/>
</dbReference>
<dbReference type="InterPro" id="IPR036186">
    <property type="entry name" value="Serpin_sf"/>
</dbReference>
<dbReference type="InterPro" id="IPR042178">
    <property type="entry name" value="Serpin_sf_1"/>
</dbReference>
<dbReference type="InterPro" id="IPR042185">
    <property type="entry name" value="Serpin_sf_2"/>
</dbReference>
<dbReference type="PANTHER" id="PTHR11461:SF165">
    <property type="entry name" value="ALPHA-1-ANTITRYPSIN"/>
    <property type="match status" value="1"/>
</dbReference>
<dbReference type="PANTHER" id="PTHR11461">
    <property type="entry name" value="SERINE PROTEASE INHIBITOR, SERPIN"/>
    <property type="match status" value="1"/>
</dbReference>
<dbReference type="Pfam" id="PF00079">
    <property type="entry name" value="Serpin"/>
    <property type="match status" value="1"/>
</dbReference>
<dbReference type="SMART" id="SM00093">
    <property type="entry name" value="SERPIN"/>
    <property type="match status" value="1"/>
</dbReference>
<dbReference type="SUPFAM" id="SSF56574">
    <property type="entry name" value="Serpins"/>
    <property type="match status" value="1"/>
</dbReference>
<dbReference type="PROSITE" id="PS00284">
    <property type="entry name" value="SERPIN"/>
    <property type="match status" value="1"/>
</dbReference>
<evidence type="ECO:0000250" key="1"/>
<evidence type="ECO:0000255" key="2"/>
<evidence type="ECO:0000269" key="3">
    <source>
    </source>
</evidence>
<evidence type="ECO:0000269" key="4">
    <source>
    </source>
</evidence>
<evidence type="ECO:0000269" key="5">
    <source>
    </source>
</evidence>
<evidence type="ECO:0000305" key="6"/>
<protein>
    <recommendedName>
        <fullName>Alpha-1-antitrypsin 1-1</fullName>
        <shortName>AAT</shortName>
    </recommendedName>
    <alternativeName>
        <fullName>Alpha-1 protease inhibitor 1</fullName>
    </alternativeName>
    <alternativeName>
        <fullName>Alpha-1-antiproteinase</fullName>
    </alternativeName>
    <alternativeName>
        <fullName>Serine protease inhibitor 1-1</fullName>
    </alternativeName>
    <alternativeName>
        <fullName>Serine protease inhibitor A1a</fullName>
        <shortName>Serpin A1a</shortName>
    </alternativeName>
</protein>
<keyword id="KW-0011">Acute phase</keyword>
<keyword id="KW-0325">Glycoprotein</keyword>
<keyword id="KW-0646">Protease inhibitor</keyword>
<keyword id="KW-1185">Reference proteome</keyword>
<keyword id="KW-0964">Secreted</keyword>
<keyword id="KW-0722">Serine protease inhibitor</keyword>
<keyword id="KW-0732">Signal</keyword>